<name>RS4_GEOSW</name>
<proteinExistence type="inferred from homology"/>
<sequence length="200" mass="23237">MARYTGPTWKISRRLGISLSGTGKELQKRPYPPGQHGPSQRRKLSEYGLQLQEKQKLRHMYGVNERQFRKTFEEAGKMPGKHGENFMILLESRLDNLVYRLGFARTRRQARQLVTHGHILVDGNRVNIPSYRVKPGQTISVREKSRNLQVIKEALELNNFVPDYLTLDAEKLEGTYTRLPERSELPSEINEALIVEFYSR</sequence>
<gene>
    <name evidence="1" type="primary">rpsD</name>
    <name type="ordered locus">GWCH70_2724</name>
</gene>
<keyword id="KW-0687">Ribonucleoprotein</keyword>
<keyword id="KW-0689">Ribosomal protein</keyword>
<keyword id="KW-0694">RNA-binding</keyword>
<keyword id="KW-0699">rRNA-binding</keyword>
<reference key="1">
    <citation type="submission" date="2009-06" db="EMBL/GenBank/DDBJ databases">
        <title>Complete sequence of chromosome of Geopacillus sp. WCH70.</title>
        <authorList>
            <consortium name="US DOE Joint Genome Institute"/>
            <person name="Lucas S."/>
            <person name="Copeland A."/>
            <person name="Lapidus A."/>
            <person name="Glavina del Rio T."/>
            <person name="Dalin E."/>
            <person name="Tice H."/>
            <person name="Bruce D."/>
            <person name="Goodwin L."/>
            <person name="Pitluck S."/>
            <person name="Chertkov O."/>
            <person name="Brettin T."/>
            <person name="Detter J.C."/>
            <person name="Han C."/>
            <person name="Larimer F."/>
            <person name="Land M."/>
            <person name="Hauser L."/>
            <person name="Kyrpides N."/>
            <person name="Mikhailova N."/>
            <person name="Brumm P."/>
            <person name="Mead D.A."/>
            <person name="Richardson P."/>
        </authorList>
    </citation>
    <scope>NUCLEOTIDE SEQUENCE [LARGE SCALE GENOMIC DNA]</scope>
    <source>
        <strain>WCH70</strain>
    </source>
</reference>
<protein>
    <recommendedName>
        <fullName evidence="1">Small ribosomal subunit protein uS4</fullName>
    </recommendedName>
    <alternativeName>
        <fullName evidence="3">30S ribosomal protein S4</fullName>
    </alternativeName>
</protein>
<dbReference type="EMBL" id="CP001638">
    <property type="protein sequence ID" value="ACS25415.1"/>
    <property type="molecule type" value="Genomic_DNA"/>
</dbReference>
<dbReference type="SMR" id="C5D699"/>
<dbReference type="STRING" id="471223.GWCH70_2724"/>
<dbReference type="KEGG" id="gwc:GWCH70_2724"/>
<dbReference type="eggNOG" id="COG0522">
    <property type="taxonomic scope" value="Bacteria"/>
</dbReference>
<dbReference type="HOGENOM" id="CLU_092403_0_1_9"/>
<dbReference type="OrthoDB" id="9803672at2"/>
<dbReference type="GO" id="GO:0015935">
    <property type="term" value="C:small ribosomal subunit"/>
    <property type="evidence" value="ECO:0007669"/>
    <property type="project" value="InterPro"/>
</dbReference>
<dbReference type="GO" id="GO:0019843">
    <property type="term" value="F:rRNA binding"/>
    <property type="evidence" value="ECO:0007669"/>
    <property type="project" value="UniProtKB-UniRule"/>
</dbReference>
<dbReference type="GO" id="GO:0003735">
    <property type="term" value="F:structural constituent of ribosome"/>
    <property type="evidence" value="ECO:0007669"/>
    <property type="project" value="InterPro"/>
</dbReference>
<dbReference type="GO" id="GO:0042274">
    <property type="term" value="P:ribosomal small subunit biogenesis"/>
    <property type="evidence" value="ECO:0007669"/>
    <property type="project" value="TreeGrafter"/>
</dbReference>
<dbReference type="GO" id="GO:0006412">
    <property type="term" value="P:translation"/>
    <property type="evidence" value="ECO:0007669"/>
    <property type="project" value="UniProtKB-UniRule"/>
</dbReference>
<dbReference type="CDD" id="cd00165">
    <property type="entry name" value="S4"/>
    <property type="match status" value="1"/>
</dbReference>
<dbReference type="FunFam" id="1.10.1050.10:FF:000001">
    <property type="entry name" value="30S ribosomal protein S4"/>
    <property type="match status" value="1"/>
</dbReference>
<dbReference type="FunFam" id="3.10.290.10:FF:000001">
    <property type="entry name" value="30S ribosomal protein S4"/>
    <property type="match status" value="1"/>
</dbReference>
<dbReference type="Gene3D" id="1.10.1050.10">
    <property type="entry name" value="Ribosomal Protein S4 Delta 41, Chain A, domain 1"/>
    <property type="match status" value="1"/>
</dbReference>
<dbReference type="Gene3D" id="3.10.290.10">
    <property type="entry name" value="RNA-binding S4 domain"/>
    <property type="match status" value="1"/>
</dbReference>
<dbReference type="HAMAP" id="MF_01306_B">
    <property type="entry name" value="Ribosomal_uS4_B"/>
    <property type="match status" value="1"/>
</dbReference>
<dbReference type="InterPro" id="IPR022801">
    <property type="entry name" value="Ribosomal_uS4"/>
</dbReference>
<dbReference type="InterPro" id="IPR005709">
    <property type="entry name" value="Ribosomal_uS4_bac-type"/>
</dbReference>
<dbReference type="InterPro" id="IPR018079">
    <property type="entry name" value="Ribosomal_uS4_CS"/>
</dbReference>
<dbReference type="InterPro" id="IPR001912">
    <property type="entry name" value="Ribosomal_uS4_N"/>
</dbReference>
<dbReference type="InterPro" id="IPR002942">
    <property type="entry name" value="S4_RNA-bd"/>
</dbReference>
<dbReference type="InterPro" id="IPR036986">
    <property type="entry name" value="S4_RNA-bd_sf"/>
</dbReference>
<dbReference type="NCBIfam" id="NF003717">
    <property type="entry name" value="PRK05327.1"/>
    <property type="match status" value="1"/>
</dbReference>
<dbReference type="NCBIfam" id="TIGR01017">
    <property type="entry name" value="rpsD_bact"/>
    <property type="match status" value="1"/>
</dbReference>
<dbReference type="PANTHER" id="PTHR11831">
    <property type="entry name" value="30S 40S RIBOSOMAL PROTEIN"/>
    <property type="match status" value="1"/>
</dbReference>
<dbReference type="PANTHER" id="PTHR11831:SF4">
    <property type="entry name" value="SMALL RIBOSOMAL SUBUNIT PROTEIN US4M"/>
    <property type="match status" value="1"/>
</dbReference>
<dbReference type="Pfam" id="PF00163">
    <property type="entry name" value="Ribosomal_S4"/>
    <property type="match status" value="1"/>
</dbReference>
<dbReference type="Pfam" id="PF01479">
    <property type="entry name" value="S4"/>
    <property type="match status" value="1"/>
</dbReference>
<dbReference type="SMART" id="SM01390">
    <property type="entry name" value="Ribosomal_S4"/>
    <property type="match status" value="1"/>
</dbReference>
<dbReference type="SMART" id="SM00363">
    <property type="entry name" value="S4"/>
    <property type="match status" value="1"/>
</dbReference>
<dbReference type="SUPFAM" id="SSF55174">
    <property type="entry name" value="Alpha-L RNA-binding motif"/>
    <property type="match status" value="1"/>
</dbReference>
<dbReference type="PROSITE" id="PS00632">
    <property type="entry name" value="RIBOSOMAL_S4"/>
    <property type="match status" value="1"/>
</dbReference>
<dbReference type="PROSITE" id="PS50889">
    <property type="entry name" value="S4"/>
    <property type="match status" value="1"/>
</dbReference>
<comment type="function">
    <text evidence="1">One of the primary rRNA binding proteins, it binds directly to 16S rRNA where it nucleates assembly of the body of the 30S subunit.</text>
</comment>
<comment type="function">
    <text evidence="1">With S5 and S12 plays an important role in translational accuracy.</text>
</comment>
<comment type="subunit">
    <text evidence="1">Part of the 30S ribosomal subunit. Contacts protein S5. The interaction surface between S4 and S5 is involved in control of translational fidelity.</text>
</comment>
<comment type="similarity">
    <text evidence="1">Belongs to the universal ribosomal protein uS4 family.</text>
</comment>
<evidence type="ECO:0000255" key="1">
    <source>
        <dbReference type="HAMAP-Rule" id="MF_01306"/>
    </source>
</evidence>
<evidence type="ECO:0000256" key="2">
    <source>
        <dbReference type="SAM" id="MobiDB-lite"/>
    </source>
</evidence>
<evidence type="ECO:0000305" key="3"/>
<feature type="chain" id="PRO_1000214292" description="Small ribosomal subunit protein uS4">
    <location>
        <begin position="1"/>
        <end position="200"/>
    </location>
</feature>
<feature type="domain" description="S4 RNA-binding" evidence="1">
    <location>
        <begin position="92"/>
        <end position="152"/>
    </location>
</feature>
<feature type="region of interest" description="Disordered" evidence="2">
    <location>
        <begin position="22"/>
        <end position="43"/>
    </location>
</feature>
<organism>
    <name type="scientific">Geobacillus sp. (strain WCH70)</name>
    <dbReference type="NCBI Taxonomy" id="471223"/>
    <lineage>
        <taxon>Bacteria</taxon>
        <taxon>Bacillati</taxon>
        <taxon>Bacillota</taxon>
        <taxon>Bacilli</taxon>
        <taxon>Bacillales</taxon>
        <taxon>Anoxybacillaceae</taxon>
        <taxon>Geobacillus</taxon>
    </lineage>
</organism>
<accession>C5D699</accession>